<organism>
    <name type="scientific">Salmonella paratyphi B (strain ATCC BAA-1250 / SPB7)</name>
    <dbReference type="NCBI Taxonomy" id="1016998"/>
    <lineage>
        <taxon>Bacteria</taxon>
        <taxon>Pseudomonadati</taxon>
        <taxon>Pseudomonadota</taxon>
        <taxon>Gammaproteobacteria</taxon>
        <taxon>Enterobacterales</taxon>
        <taxon>Enterobacteriaceae</taxon>
        <taxon>Salmonella</taxon>
    </lineage>
</organism>
<dbReference type="EC" id="2.9.1.1" evidence="1"/>
<dbReference type="EMBL" id="CP000886">
    <property type="protein sequence ID" value="ABX69889.1"/>
    <property type="molecule type" value="Genomic_DNA"/>
</dbReference>
<dbReference type="RefSeq" id="WP_000200195.1">
    <property type="nucleotide sequence ID" value="NC_010102.1"/>
</dbReference>
<dbReference type="SMR" id="A9MVI1"/>
<dbReference type="KEGG" id="spq:SPAB_04576"/>
<dbReference type="PATRIC" id="fig|1016998.12.peg.4302"/>
<dbReference type="HOGENOM" id="CLU_038142_1_0_6"/>
<dbReference type="BioCyc" id="SENT1016998:SPAB_RS18610-MONOMER"/>
<dbReference type="UniPathway" id="UPA00906">
    <property type="reaction ID" value="UER00896"/>
</dbReference>
<dbReference type="Proteomes" id="UP000008556">
    <property type="component" value="Chromosome"/>
</dbReference>
<dbReference type="GO" id="GO:0005737">
    <property type="term" value="C:cytoplasm"/>
    <property type="evidence" value="ECO:0007669"/>
    <property type="project" value="UniProtKB-SubCell"/>
</dbReference>
<dbReference type="GO" id="GO:0004125">
    <property type="term" value="F:L-seryl-tRNA(Sec) selenium transferase activity"/>
    <property type="evidence" value="ECO:0007669"/>
    <property type="project" value="UniProtKB-UniRule"/>
</dbReference>
<dbReference type="GO" id="GO:0001717">
    <property type="term" value="P:conversion of seryl-tRNAsec to selenocys-tRNAsec"/>
    <property type="evidence" value="ECO:0007669"/>
    <property type="project" value="UniProtKB-UniRule"/>
</dbReference>
<dbReference type="GO" id="GO:0001514">
    <property type="term" value="P:selenocysteine incorporation"/>
    <property type="evidence" value="ECO:0007669"/>
    <property type="project" value="UniProtKB-UniRule"/>
</dbReference>
<dbReference type="FunFam" id="3.40.640.10:FF:000028">
    <property type="entry name" value="L-seryl-tRNA(Sec) selenium transferase"/>
    <property type="match status" value="1"/>
</dbReference>
<dbReference type="FunFam" id="3.90.1150.180:FF:000001">
    <property type="entry name" value="L-seryl-tRNA(Sec) selenium transferase"/>
    <property type="match status" value="1"/>
</dbReference>
<dbReference type="Gene3D" id="3.90.1150.180">
    <property type="match status" value="1"/>
</dbReference>
<dbReference type="Gene3D" id="3.40.640.10">
    <property type="entry name" value="Type I PLP-dependent aspartate aminotransferase-like (Major domain)"/>
    <property type="match status" value="1"/>
</dbReference>
<dbReference type="HAMAP" id="MF_00423">
    <property type="entry name" value="SelA"/>
    <property type="match status" value="1"/>
</dbReference>
<dbReference type="InterPro" id="IPR015424">
    <property type="entry name" value="PyrdxlP-dep_Trfase"/>
</dbReference>
<dbReference type="InterPro" id="IPR015421">
    <property type="entry name" value="PyrdxlP-dep_Trfase_major"/>
</dbReference>
<dbReference type="InterPro" id="IPR018319">
    <property type="entry name" value="SelA-like"/>
</dbReference>
<dbReference type="InterPro" id="IPR004534">
    <property type="entry name" value="SelA_trans"/>
</dbReference>
<dbReference type="InterPro" id="IPR025862">
    <property type="entry name" value="SelA_trans_N_dom"/>
</dbReference>
<dbReference type="NCBIfam" id="TIGR00474">
    <property type="entry name" value="selA"/>
    <property type="match status" value="1"/>
</dbReference>
<dbReference type="PANTHER" id="PTHR32328">
    <property type="entry name" value="L-SERYL-TRNA(SEC) SELENIUM TRANSFERASE"/>
    <property type="match status" value="1"/>
</dbReference>
<dbReference type="PANTHER" id="PTHR32328:SF0">
    <property type="entry name" value="L-SERYL-TRNA(SEC) SELENIUM TRANSFERASE"/>
    <property type="match status" value="1"/>
</dbReference>
<dbReference type="Pfam" id="PF12390">
    <property type="entry name" value="Se-cys_synth_N"/>
    <property type="match status" value="1"/>
</dbReference>
<dbReference type="Pfam" id="PF03841">
    <property type="entry name" value="SelA"/>
    <property type="match status" value="1"/>
</dbReference>
<dbReference type="SUPFAM" id="SSF53383">
    <property type="entry name" value="PLP-dependent transferases"/>
    <property type="match status" value="1"/>
</dbReference>
<feature type="chain" id="PRO_1000080563" description="L-seryl-tRNA(Sec) selenium transferase">
    <location>
        <begin position="1"/>
        <end position="463"/>
    </location>
</feature>
<feature type="modified residue" description="N6-(pyridoxal phosphate)lysine" evidence="1">
    <location>
        <position position="295"/>
    </location>
</feature>
<name>SELA_SALPB</name>
<reference key="1">
    <citation type="submission" date="2007-11" db="EMBL/GenBank/DDBJ databases">
        <authorList>
            <consortium name="The Salmonella enterica serovar Paratyphi B Genome Sequencing Project"/>
            <person name="McClelland M."/>
            <person name="Sanderson E.K."/>
            <person name="Porwollik S."/>
            <person name="Spieth J."/>
            <person name="Clifton W.S."/>
            <person name="Fulton R."/>
            <person name="Cordes M."/>
            <person name="Wollam A."/>
            <person name="Shah N."/>
            <person name="Pepin K."/>
            <person name="Bhonagiri V."/>
            <person name="Nash W."/>
            <person name="Johnson M."/>
            <person name="Thiruvilangam P."/>
            <person name="Wilson R."/>
        </authorList>
    </citation>
    <scope>NUCLEOTIDE SEQUENCE [LARGE SCALE GENOMIC DNA]</scope>
    <source>
        <strain>ATCC BAA-1250 / SPB7</strain>
    </source>
</reference>
<accession>A9MVI1</accession>
<evidence type="ECO:0000255" key="1">
    <source>
        <dbReference type="HAMAP-Rule" id="MF_00423"/>
    </source>
</evidence>
<protein>
    <recommendedName>
        <fullName evidence="1">L-seryl-tRNA(Sec) selenium transferase</fullName>
        <ecNumber evidence="1">2.9.1.1</ecNumber>
    </recommendedName>
    <alternativeName>
        <fullName evidence="1">Selenocysteine synthase</fullName>
        <shortName evidence="1">Sec synthase</shortName>
    </alternativeName>
    <alternativeName>
        <fullName evidence="1">Selenocysteinyl-tRNA(Sec) synthase</fullName>
    </alternativeName>
</protein>
<sequence>MTSETRTLYSQLPAIDRLLHDSAFLSLRDRYGHTQVVDLLRRMLDDARDVIRNTQTLPDWYADWAQEAKLRLENAAQSALRPVINLTGTVLHTNLGRALQAQEAVEAVTQAMRAPVTLEYDLDGAGRGHRDRALATLLCRITGAEDACIVNNNAAAVLLMLAATASGKEVVVSRGELVEIGGAFRIPDVMRQAGCTLHEVGTTNRTHAKDYRQAVNENTGLLMKVHTSNYSIEGFTKTVEEAELAEIGRELDIPVVADLGSGSLVDLSQYGLPKEPMPQQLIAAGVSMVSFSGDKLLGGPQAGIIVGKKAMIAQLQSHPLKRALRADKMTLAALEATLRLYLHPEALAEKLPTLRLLTRSEASIREQAQRLQARLAARYGDEFALEVKPCLSQIGSGSLPVDRLPSAAMTFTPHDGRGSRLEALAARWRTLPVPVIGRIYDGRLWLDMRCLEDESRFMEMMLK</sequence>
<comment type="function">
    <text evidence="1">Converts seryl-tRNA(Sec) to selenocysteinyl-tRNA(Sec) required for selenoprotein biosynthesis.</text>
</comment>
<comment type="catalytic activity">
    <reaction evidence="1">
        <text>L-seryl-tRNA(Sec) + selenophosphate + H(+) = L-selenocysteinyl-tRNA(Sec) + phosphate</text>
        <dbReference type="Rhea" id="RHEA:22728"/>
        <dbReference type="Rhea" id="RHEA-COMP:9742"/>
        <dbReference type="Rhea" id="RHEA-COMP:9743"/>
        <dbReference type="ChEBI" id="CHEBI:15378"/>
        <dbReference type="ChEBI" id="CHEBI:16144"/>
        <dbReference type="ChEBI" id="CHEBI:43474"/>
        <dbReference type="ChEBI" id="CHEBI:78533"/>
        <dbReference type="ChEBI" id="CHEBI:78573"/>
        <dbReference type="EC" id="2.9.1.1"/>
    </reaction>
</comment>
<comment type="cofactor">
    <cofactor evidence="1">
        <name>pyridoxal 5'-phosphate</name>
        <dbReference type="ChEBI" id="CHEBI:597326"/>
    </cofactor>
</comment>
<comment type="pathway">
    <text evidence="1">Aminoacyl-tRNA biosynthesis; selenocysteinyl-tRNA(Sec) biosynthesis; selenocysteinyl-tRNA(Sec) from L-seryl-tRNA(Sec) (bacterial route): step 1/1.</text>
</comment>
<comment type="subunit">
    <text evidence="1">Homodecamer; pentamer of dimers. Binds only one seryl-tRNA(Sec) per dimer.</text>
</comment>
<comment type="subcellular location">
    <subcellularLocation>
        <location evidence="1">Cytoplasm</location>
    </subcellularLocation>
</comment>
<comment type="similarity">
    <text evidence="1">Belongs to the SelA family.</text>
</comment>
<gene>
    <name evidence="1" type="primary">selA</name>
    <name type="ordered locus">SPAB_04576</name>
</gene>
<proteinExistence type="inferred from homology"/>
<keyword id="KW-0963">Cytoplasm</keyword>
<keyword id="KW-0648">Protein biosynthesis</keyword>
<keyword id="KW-0663">Pyridoxal phosphate</keyword>
<keyword id="KW-0711">Selenium</keyword>
<keyword id="KW-0808">Transferase</keyword>